<name>HIS1_SALHS</name>
<reference key="1">
    <citation type="journal article" date="2011" name="J. Bacteriol.">
        <title>Comparative genomics of 28 Salmonella enterica isolates: evidence for CRISPR-mediated adaptive sublineage evolution.</title>
        <authorList>
            <person name="Fricke W.F."/>
            <person name="Mammel M.K."/>
            <person name="McDermott P.F."/>
            <person name="Tartera C."/>
            <person name="White D.G."/>
            <person name="Leclerc J.E."/>
            <person name="Ravel J."/>
            <person name="Cebula T.A."/>
        </authorList>
    </citation>
    <scope>NUCLEOTIDE SEQUENCE [LARGE SCALE GENOMIC DNA]</scope>
    <source>
        <strain>SL476</strain>
    </source>
</reference>
<organism>
    <name type="scientific">Salmonella heidelberg (strain SL476)</name>
    <dbReference type="NCBI Taxonomy" id="454169"/>
    <lineage>
        <taxon>Bacteria</taxon>
        <taxon>Pseudomonadati</taxon>
        <taxon>Pseudomonadota</taxon>
        <taxon>Gammaproteobacteria</taxon>
        <taxon>Enterobacterales</taxon>
        <taxon>Enterobacteriaceae</taxon>
        <taxon>Salmonella</taxon>
    </lineage>
</organism>
<comment type="function">
    <text evidence="1">Catalyzes the condensation of ATP and 5-phosphoribose 1-diphosphate to form N'-(5'-phosphoribosyl)-ATP (PR-ATP). Has a crucial role in the pathway because the rate of histidine biosynthesis seems to be controlled primarily by regulation of HisG enzymatic activity.</text>
</comment>
<comment type="catalytic activity">
    <reaction evidence="1">
        <text>1-(5-phospho-beta-D-ribosyl)-ATP + diphosphate = 5-phospho-alpha-D-ribose 1-diphosphate + ATP</text>
        <dbReference type="Rhea" id="RHEA:18473"/>
        <dbReference type="ChEBI" id="CHEBI:30616"/>
        <dbReference type="ChEBI" id="CHEBI:33019"/>
        <dbReference type="ChEBI" id="CHEBI:58017"/>
        <dbReference type="ChEBI" id="CHEBI:73183"/>
        <dbReference type="EC" id="2.4.2.17"/>
    </reaction>
</comment>
<comment type="cofactor">
    <cofactor evidence="1">
        <name>Mg(2+)</name>
        <dbReference type="ChEBI" id="CHEBI:18420"/>
    </cofactor>
</comment>
<comment type="activity regulation">
    <text evidence="1">Feedback inhibited by histidine.</text>
</comment>
<comment type="pathway">
    <text evidence="1">Amino-acid biosynthesis; L-histidine biosynthesis; L-histidine from 5-phospho-alpha-D-ribose 1-diphosphate: step 1/9.</text>
</comment>
<comment type="subunit">
    <text evidence="1">Equilibrium between an active dimeric form, an inactive hexameric form and higher aggregates. Interconversion between the various forms is largely reversible and is influenced by the natural substrates and inhibitors of the enzyme.</text>
</comment>
<comment type="subcellular location">
    <subcellularLocation>
        <location evidence="1">Cytoplasm</location>
    </subcellularLocation>
</comment>
<comment type="similarity">
    <text evidence="1">Belongs to the ATP phosphoribosyltransferase family. Long subfamily.</text>
</comment>
<keyword id="KW-0028">Amino-acid biosynthesis</keyword>
<keyword id="KW-0067">ATP-binding</keyword>
<keyword id="KW-0963">Cytoplasm</keyword>
<keyword id="KW-0328">Glycosyltransferase</keyword>
<keyword id="KW-0368">Histidine biosynthesis</keyword>
<keyword id="KW-0460">Magnesium</keyword>
<keyword id="KW-0479">Metal-binding</keyword>
<keyword id="KW-0547">Nucleotide-binding</keyword>
<keyword id="KW-0808">Transferase</keyword>
<proteinExistence type="inferred from homology"/>
<dbReference type="EC" id="2.4.2.17" evidence="1"/>
<dbReference type="EMBL" id="CP001120">
    <property type="protein sequence ID" value="ACF69887.1"/>
    <property type="molecule type" value="Genomic_DNA"/>
</dbReference>
<dbReference type="RefSeq" id="WP_000886603.1">
    <property type="nucleotide sequence ID" value="NC_011083.1"/>
</dbReference>
<dbReference type="SMR" id="B4T9N3"/>
<dbReference type="KEGG" id="seh:SeHA_C2297"/>
<dbReference type="HOGENOM" id="CLU_038115_1_0_6"/>
<dbReference type="UniPathway" id="UPA00031">
    <property type="reaction ID" value="UER00006"/>
</dbReference>
<dbReference type="Proteomes" id="UP000001866">
    <property type="component" value="Chromosome"/>
</dbReference>
<dbReference type="GO" id="GO:0005737">
    <property type="term" value="C:cytoplasm"/>
    <property type="evidence" value="ECO:0007669"/>
    <property type="project" value="UniProtKB-SubCell"/>
</dbReference>
<dbReference type="GO" id="GO:0005524">
    <property type="term" value="F:ATP binding"/>
    <property type="evidence" value="ECO:0007669"/>
    <property type="project" value="UniProtKB-KW"/>
</dbReference>
<dbReference type="GO" id="GO:0003879">
    <property type="term" value="F:ATP phosphoribosyltransferase activity"/>
    <property type="evidence" value="ECO:0007669"/>
    <property type="project" value="UniProtKB-UniRule"/>
</dbReference>
<dbReference type="GO" id="GO:0000287">
    <property type="term" value="F:magnesium ion binding"/>
    <property type="evidence" value="ECO:0007669"/>
    <property type="project" value="UniProtKB-UniRule"/>
</dbReference>
<dbReference type="GO" id="GO:0000105">
    <property type="term" value="P:L-histidine biosynthetic process"/>
    <property type="evidence" value="ECO:0007669"/>
    <property type="project" value="UniProtKB-UniRule"/>
</dbReference>
<dbReference type="CDD" id="cd13592">
    <property type="entry name" value="PBP2_HisGL2"/>
    <property type="match status" value="1"/>
</dbReference>
<dbReference type="FunFam" id="3.30.70.120:FF:000002">
    <property type="entry name" value="ATP phosphoribosyltransferase"/>
    <property type="match status" value="1"/>
</dbReference>
<dbReference type="FunFam" id="3.40.190.10:FF:000008">
    <property type="entry name" value="ATP phosphoribosyltransferase"/>
    <property type="match status" value="1"/>
</dbReference>
<dbReference type="Gene3D" id="3.30.70.120">
    <property type="match status" value="1"/>
</dbReference>
<dbReference type="Gene3D" id="3.40.190.10">
    <property type="entry name" value="Periplasmic binding protein-like II"/>
    <property type="match status" value="2"/>
</dbReference>
<dbReference type="HAMAP" id="MF_00079">
    <property type="entry name" value="HisG_Long"/>
    <property type="match status" value="1"/>
</dbReference>
<dbReference type="InterPro" id="IPR020621">
    <property type="entry name" value="ATP-PRT_HisG_long"/>
</dbReference>
<dbReference type="InterPro" id="IPR013820">
    <property type="entry name" value="ATP_PRibTrfase_cat"/>
</dbReference>
<dbReference type="InterPro" id="IPR018198">
    <property type="entry name" value="ATP_PRibTrfase_CS"/>
</dbReference>
<dbReference type="InterPro" id="IPR001348">
    <property type="entry name" value="ATP_PRibTrfase_HisG"/>
</dbReference>
<dbReference type="InterPro" id="IPR013115">
    <property type="entry name" value="HisG_C"/>
</dbReference>
<dbReference type="InterPro" id="IPR011322">
    <property type="entry name" value="N-reg_PII-like_a/b"/>
</dbReference>
<dbReference type="InterPro" id="IPR015867">
    <property type="entry name" value="N-reg_PII/ATP_PRibTrfase_C"/>
</dbReference>
<dbReference type="NCBIfam" id="TIGR00070">
    <property type="entry name" value="hisG"/>
    <property type="match status" value="1"/>
</dbReference>
<dbReference type="NCBIfam" id="TIGR03455">
    <property type="entry name" value="HisG_C-term"/>
    <property type="match status" value="1"/>
</dbReference>
<dbReference type="PANTHER" id="PTHR21403:SF8">
    <property type="entry name" value="ATP PHOSPHORIBOSYLTRANSFERASE"/>
    <property type="match status" value="1"/>
</dbReference>
<dbReference type="PANTHER" id="PTHR21403">
    <property type="entry name" value="ATP PHOSPHORIBOSYLTRANSFERASE ATP-PRTASE"/>
    <property type="match status" value="1"/>
</dbReference>
<dbReference type="Pfam" id="PF01634">
    <property type="entry name" value="HisG"/>
    <property type="match status" value="1"/>
</dbReference>
<dbReference type="Pfam" id="PF08029">
    <property type="entry name" value="HisG_C"/>
    <property type="match status" value="1"/>
</dbReference>
<dbReference type="SUPFAM" id="SSF54913">
    <property type="entry name" value="GlnB-like"/>
    <property type="match status" value="1"/>
</dbReference>
<dbReference type="SUPFAM" id="SSF53850">
    <property type="entry name" value="Periplasmic binding protein-like II"/>
    <property type="match status" value="1"/>
</dbReference>
<dbReference type="PROSITE" id="PS01316">
    <property type="entry name" value="ATP_P_PHORIBOSYLTR"/>
    <property type="match status" value="1"/>
</dbReference>
<protein>
    <recommendedName>
        <fullName evidence="1">ATP phosphoribosyltransferase</fullName>
        <shortName evidence="1">ATP-PRT</shortName>
        <shortName evidence="1">ATP-PRTase</shortName>
        <ecNumber evidence="1">2.4.2.17</ecNumber>
    </recommendedName>
</protein>
<gene>
    <name evidence="1" type="primary">hisG</name>
    <name type="ordered locus">SeHA_C2297</name>
</gene>
<evidence type="ECO:0000255" key="1">
    <source>
        <dbReference type="HAMAP-Rule" id="MF_00079"/>
    </source>
</evidence>
<accession>B4T9N3</accession>
<feature type="chain" id="PRO_1000092748" description="ATP phosphoribosyltransferase">
    <location>
        <begin position="1"/>
        <end position="299"/>
    </location>
</feature>
<sequence>MLDNTRLRIAIQKSGRLSDDSRELLARCGIKINLHTQRLIAMAENMPIDILRVRDDDIPGLVMDGVVDLGIIGENVLEEELLNRRAQGEDPRYLTLRRLDFGGCRLSLATPVDEAWDGPAALDGKRIATSYPHLLKRYLDQKGVSFKSCLLNGSVEVAPRAGLADAICDLVSTGATLEANGLREVEVIYRSKACLIQRDGEMAQSKQELIDKLLTRIQGVIQARESKYIMMHAPSERLEEVIALLPGAERPTILPLAGEQQRVAMHMVSSETLFWETMEKLKALGASSILVLPIEKMME</sequence>